<dbReference type="EMBL" id="AK041618">
    <property type="protein sequence ID" value="BAC31006.1"/>
    <property type="molecule type" value="mRNA"/>
</dbReference>
<dbReference type="EMBL" id="AK171987">
    <property type="protein sequence ID" value="BAE42760.1"/>
    <property type="molecule type" value="mRNA"/>
</dbReference>
<dbReference type="EMBL" id="BC137663">
    <property type="protein sequence ID" value="AAI37664.1"/>
    <property type="molecule type" value="mRNA"/>
</dbReference>
<dbReference type="EMBL" id="BC137664">
    <property type="protein sequence ID" value="AAI37665.1"/>
    <property type="molecule type" value="mRNA"/>
</dbReference>
<dbReference type="CCDS" id="CCDS29787.1"/>
<dbReference type="RefSeq" id="NP_780716.1">
    <property type="nucleotide sequence ID" value="NM_175507.3"/>
</dbReference>
<dbReference type="SMR" id="Q8BY79"/>
<dbReference type="BioGRID" id="232219">
    <property type="interactions" value="1"/>
</dbReference>
<dbReference type="FunCoup" id="Q8BY79">
    <property type="interactions" value="512"/>
</dbReference>
<dbReference type="STRING" id="10090.ENSMUSP00000061282"/>
<dbReference type="TCDB" id="2.A.7.28.1">
    <property type="family name" value="the drug/metabolite transporter (dmt) superfamily"/>
</dbReference>
<dbReference type="PhosphoSitePlus" id="Q8BY79"/>
<dbReference type="PaxDb" id="10090-ENSMUSP00000061282"/>
<dbReference type="PeptideAtlas" id="Q8BY79"/>
<dbReference type="ProteomicsDB" id="260775"/>
<dbReference type="Antibodypedia" id="82282">
    <property type="antibodies" value="4 antibodies from 2 providers"/>
</dbReference>
<dbReference type="DNASU" id="240660"/>
<dbReference type="Ensembl" id="ENSMUST00000054098.4">
    <property type="protein sequence ID" value="ENSMUSP00000061282.3"/>
    <property type="gene ID" value="ENSMUSG00000044026.4"/>
</dbReference>
<dbReference type="GeneID" id="240660"/>
<dbReference type="KEGG" id="mmu:240660"/>
<dbReference type="UCSC" id="uc008hjn.1">
    <property type="organism name" value="mouse"/>
</dbReference>
<dbReference type="AGR" id="MGI:2444789"/>
<dbReference type="CTD" id="159371"/>
<dbReference type="MGI" id="MGI:2444789">
    <property type="gene designation" value="Slc35g1"/>
</dbReference>
<dbReference type="VEuPathDB" id="HostDB:ENSMUSG00000044026"/>
<dbReference type="eggNOG" id="KOG4510">
    <property type="taxonomic scope" value="Eukaryota"/>
</dbReference>
<dbReference type="GeneTree" id="ENSGT00940000153249"/>
<dbReference type="HOGENOM" id="CLU_032828_1_2_1"/>
<dbReference type="InParanoid" id="Q8BY79"/>
<dbReference type="OMA" id="KYSLWDA"/>
<dbReference type="OrthoDB" id="306876at2759"/>
<dbReference type="PhylomeDB" id="Q8BY79"/>
<dbReference type="TreeFam" id="TF323956"/>
<dbReference type="BioGRID-ORCS" id="240660">
    <property type="hits" value="3 hits in 77 CRISPR screens"/>
</dbReference>
<dbReference type="PRO" id="PR:Q8BY79"/>
<dbReference type="Proteomes" id="UP000000589">
    <property type="component" value="Chromosome 19"/>
</dbReference>
<dbReference type="RNAct" id="Q8BY79">
    <property type="molecule type" value="protein"/>
</dbReference>
<dbReference type="Bgee" id="ENSMUSG00000044026">
    <property type="expression patterns" value="Expressed in urinary bladder urothelium and 158 other cell types or tissues"/>
</dbReference>
<dbReference type="GO" id="GO:0005789">
    <property type="term" value="C:endoplasmic reticulum membrane"/>
    <property type="evidence" value="ECO:0007669"/>
    <property type="project" value="UniProtKB-SubCell"/>
</dbReference>
<dbReference type="GO" id="GO:0005886">
    <property type="term" value="C:plasma membrane"/>
    <property type="evidence" value="ECO:0007669"/>
    <property type="project" value="UniProtKB-SubCell"/>
</dbReference>
<dbReference type="GO" id="GO:1990034">
    <property type="term" value="P:calcium ion export across plasma membrane"/>
    <property type="evidence" value="ECO:0007669"/>
    <property type="project" value="Ensembl"/>
</dbReference>
<dbReference type="GO" id="GO:0051480">
    <property type="term" value="P:regulation of cytosolic calcium ion concentration"/>
    <property type="evidence" value="ECO:0007669"/>
    <property type="project" value="Ensembl"/>
</dbReference>
<dbReference type="FunFam" id="1.10.3730.20:FF:000026">
    <property type="entry name" value="Solute carrier family 35, member G1"/>
    <property type="match status" value="1"/>
</dbReference>
<dbReference type="InterPro" id="IPR000620">
    <property type="entry name" value="EamA_dom"/>
</dbReference>
<dbReference type="PANTHER" id="PTHR22911">
    <property type="entry name" value="ACYL-MALONYL CONDENSING ENZYME-RELATED"/>
    <property type="match status" value="1"/>
</dbReference>
<dbReference type="PANTHER" id="PTHR22911:SF6">
    <property type="entry name" value="SOLUTE CARRIER FAMILY 35 MEMBER G1"/>
    <property type="match status" value="1"/>
</dbReference>
<dbReference type="Pfam" id="PF00892">
    <property type="entry name" value="EamA"/>
    <property type="match status" value="2"/>
</dbReference>
<dbReference type="SUPFAM" id="SSF103481">
    <property type="entry name" value="Multidrug resistance efflux transporter EmrE"/>
    <property type="match status" value="2"/>
</dbReference>
<comment type="function">
    <text evidence="1">May play a role in intracellular calcium sensing and homeostasis. May act as a negative regulator of plasma membrane calcium-transporting ATPases preventing calcium efflux from the cell (By similarity).</text>
</comment>
<comment type="subunit">
    <text evidence="1">Interacts with STIM1; stimulated by depletion of intracellular calcium. Interacts with ORAI1. Interacts with the plasma membrane calcium-transporting ATPases ATP2B1 and ATP2B4. Interacts with ATP1A1, ATP2A2, KPNB1 and XPO1 (By similarity).</text>
</comment>
<comment type="subcellular location">
    <subcellularLocation>
        <location evidence="1">Cell membrane</location>
        <topology evidence="1">Multi-pass membrane protein</topology>
    </subcellularLocation>
    <subcellularLocation>
        <location evidence="1">Endoplasmic reticulum membrane</location>
        <topology evidence="1">Multi-pass membrane protein</topology>
    </subcellularLocation>
    <text evidence="1">Translocates from the endoplasmic reticulum to the cell membrane in response to a depletion of intracellular calcium and is detected at punctae corresponding to junctions between the endoplasmic reticulum and the cell membrane.</text>
</comment>
<comment type="similarity">
    <text evidence="3">Belongs to the TMEM20 family.</text>
</comment>
<gene>
    <name type="primary">Slc35g1</name>
    <name type="synonym">Tmem20</name>
</gene>
<proteinExistence type="evidence at transcript level"/>
<organism>
    <name type="scientific">Mus musculus</name>
    <name type="common">Mouse</name>
    <dbReference type="NCBI Taxonomy" id="10090"/>
    <lineage>
        <taxon>Eukaryota</taxon>
        <taxon>Metazoa</taxon>
        <taxon>Chordata</taxon>
        <taxon>Craniata</taxon>
        <taxon>Vertebrata</taxon>
        <taxon>Euteleostomi</taxon>
        <taxon>Mammalia</taxon>
        <taxon>Eutheria</taxon>
        <taxon>Euarchontoglires</taxon>
        <taxon>Glires</taxon>
        <taxon>Rodentia</taxon>
        <taxon>Myomorpha</taxon>
        <taxon>Muroidea</taxon>
        <taxon>Muridae</taxon>
        <taxon>Murinae</taxon>
        <taxon>Mus</taxon>
        <taxon>Mus</taxon>
    </lineage>
</organism>
<evidence type="ECO:0000250" key="1"/>
<evidence type="ECO:0000255" key="2"/>
<evidence type="ECO:0000305" key="3"/>
<sequence length="368" mass="40217">MGPPESAAELAAEAVELREPELQLADPASPGEEHVDVEAEGAPGRGRCWPCGAWACGSRGEPEAKKKAPCPGLGLFYTVLSAFLFSVASLFVKKVQGVHAVEISAFRCVVQMLVIIPCLIYRKTGFIGPKGQRLFLFLRGVFGSSAMILMYYAFQTTSLADATVIAFSCPVFTSIFAWIFLKEKYSLWDAFFTLFAIAGVILIVRPPFIFGSDTSGMRESYSEHIKGTFAAIGHAVLAAITLVILRKMGKSVDYFLSIWYYVILGLPEAIIILFVIGEWSLPYCGLDRLFLILIGLLGLGGQIFITKAVQIEKAGLVAIMKTMDIVFAFIFQIAFFDNVPTWWTVGGALCVVVSTTGATIRRWLQGSK</sequence>
<feature type="chain" id="PRO_0000244464" description="Solute carrier family 35 member G1">
    <location>
        <begin position="1"/>
        <end position="368"/>
    </location>
</feature>
<feature type="transmembrane region" description="Helical" evidence="2">
    <location>
        <begin position="72"/>
        <end position="92"/>
    </location>
</feature>
<feature type="transmembrane region" description="Helical" evidence="2">
    <location>
        <begin position="100"/>
        <end position="120"/>
    </location>
</feature>
<feature type="transmembrane region" description="Helical" evidence="2">
    <location>
        <begin position="134"/>
        <end position="154"/>
    </location>
</feature>
<feature type="transmembrane region" description="Helical" evidence="2">
    <location>
        <begin position="161"/>
        <end position="181"/>
    </location>
</feature>
<feature type="transmembrane region" description="Helical" evidence="2">
    <location>
        <begin position="190"/>
        <end position="210"/>
    </location>
</feature>
<feature type="transmembrane region" description="Helical" evidence="2">
    <location>
        <begin position="225"/>
        <end position="245"/>
    </location>
</feature>
<feature type="transmembrane region" description="Helical" evidence="2">
    <location>
        <begin position="256"/>
        <end position="276"/>
    </location>
</feature>
<feature type="transmembrane region" description="Helical" evidence="2">
    <location>
        <begin position="289"/>
        <end position="309"/>
    </location>
</feature>
<feature type="transmembrane region" description="Helical" evidence="2">
    <location>
        <begin position="316"/>
        <end position="336"/>
    </location>
</feature>
<feature type="transmembrane region" description="Helical" evidence="2">
    <location>
        <begin position="340"/>
        <end position="360"/>
    </location>
</feature>
<feature type="domain" description="EamA 1">
    <location>
        <begin position="83"/>
        <end position="205"/>
    </location>
</feature>
<feature type="domain" description="EamA 2">
    <location>
        <begin position="236"/>
        <end position="360"/>
    </location>
</feature>
<name>S35G1_MOUSE</name>
<keyword id="KW-1003">Cell membrane</keyword>
<keyword id="KW-0256">Endoplasmic reticulum</keyword>
<keyword id="KW-0472">Membrane</keyword>
<keyword id="KW-1185">Reference proteome</keyword>
<keyword id="KW-0677">Repeat</keyword>
<keyword id="KW-0812">Transmembrane</keyword>
<keyword id="KW-1133">Transmembrane helix</keyword>
<reference key="1">
    <citation type="journal article" date="2005" name="Science">
        <title>The transcriptional landscape of the mammalian genome.</title>
        <authorList>
            <person name="Carninci P."/>
            <person name="Kasukawa T."/>
            <person name="Katayama S."/>
            <person name="Gough J."/>
            <person name="Frith M.C."/>
            <person name="Maeda N."/>
            <person name="Oyama R."/>
            <person name="Ravasi T."/>
            <person name="Lenhard B."/>
            <person name="Wells C."/>
            <person name="Kodzius R."/>
            <person name="Shimokawa K."/>
            <person name="Bajic V.B."/>
            <person name="Brenner S.E."/>
            <person name="Batalov S."/>
            <person name="Forrest A.R."/>
            <person name="Zavolan M."/>
            <person name="Davis M.J."/>
            <person name="Wilming L.G."/>
            <person name="Aidinis V."/>
            <person name="Allen J.E."/>
            <person name="Ambesi-Impiombato A."/>
            <person name="Apweiler R."/>
            <person name="Aturaliya R.N."/>
            <person name="Bailey T.L."/>
            <person name="Bansal M."/>
            <person name="Baxter L."/>
            <person name="Beisel K.W."/>
            <person name="Bersano T."/>
            <person name="Bono H."/>
            <person name="Chalk A.M."/>
            <person name="Chiu K.P."/>
            <person name="Choudhary V."/>
            <person name="Christoffels A."/>
            <person name="Clutterbuck D.R."/>
            <person name="Crowe M.L."/>
            <person name="Dalla E."/>
            <person name="Dalrymple B.P."/>
            <person name="de Bono B."/>
            <person name="Della Gatta G."/>
            <person name="di Bernardo D."/>
            <person name="Down T."/>
            <person name="Engstrom P."/>
            <person name="Fagiolini M."/>
            <person name="Faulkner G."/>
            <person name="Fletcher C.F."/>
            <person name="Fukushima T."/>
            <person name="Furuno M."/>
            <person name="Futaki S."/>
            <person name="Gariboldi M."/>
            <person name="Georgii-Hemming P."/>
            <person name="Gingeras T.R."/>
            <person name="Gojobori T."/>
            <person name="Green R.E."/>
            <person name="Gustincich S."/>
            <person name="Harbers M."/>
            <person name="Hayashi Y."/>
            <person name="Hensch T.K."/>
            <person name="Hirokawa N."/>
            <person name="Hill D."/>
            <person name="Huminiecki L."/>
            <person name="Iacono M."/>
            <person name="Ikeo K."/>
            <person name="Iwama A."/>
            <person name="Ishikawa T."/>
            <person name="Jakt M."/>
            <person name="Kanapin A."/>
            <person name="Katoh M."/>
            <person name="Kawasawa Y."/>
            <person name="Kelso J."/>
            <person name="Kitamura H."/>
            <person name="Kitano H."/>
            <person name="Kollias G."/>
            <person name="Krishnan S.P."/>
            <person name="Kruger A."/>
            <person name="Kummerfeld S.K."/>
            <person name="Kurochkin I.V."/>
            <person name="Lareau L.F."/>
            <person name="Lazarevic D."/>
            <person name="Lipovich L."/>
            <person name="Liu J."/>
            <person name="Liuni S."/>
            <person name="McWilliam S."/>
            <person name="Madan Babu M."/>
            <person name="Madera M."/>
            <person name="Marchionni L."/>
            <person name="Matsuda H."/>
            <person name="Matsuzawa S."/>
            <person name="Miki H."/>
            <person name="Mignone F."/>
            <person name="Miyake S."/>
            <person name="Morris K."/>
            <person name="Mottagui-Tabar S."/>
            <person name="Mulder N."/>
            <person name="Nakano N."/>
            <person name="Nakauchi H."/>
            <person name="Ng P."/>
            <person name="Nilsson R."/>
            <person name="Nishiguchi S."/>
            <person name="Nishikawa S."/>
            <person name="Nori F."/>
            <person name="Ohara O."/>
            <person name="Okazaki Y."/>
            <person name="Orlando V."/>
            <person name="Pang K.C."/>
            <person name="Pavan W.J."/>
            <person name="Pavesi G."/>
            <person name="Pesole G."/>
            <person name="Petrovsky N."/>
            <person name="Piazza S."/>
            <person name="Reed J."/>
            <person name="Reid J.F."/>
            <person name="Ring B.Z."/>
            <person name="Ringwald M."/>
            <person name="Rost B."/>
            <person name="Ruan Y."/>
            <person name="Salzberg S.L."/>
            <person name="Sandelin A."/>
            <person name="Schneider C."/>
            <person name="Schoenbach C."/>
            <person name="Sekiguchi K."/>
            <person name="Semple C.A."/>
            <person name="Seno S."/>
            <person name="Sessa L."/>
            <person name="Sheng Y."/>
            <person name="Shibata Y."/>
            <person name="Shimada H."/>
            <person name="Shimada K."/>
            <person name="Silva D."/>
            <person name="Sinclair B."/>
            <person name="Sperling S."/>
            <person name="Stupka E."/>
            <person name="Sugiura K."/>
            <person name="Sultana R."/>
            <person name="Takenaka Y."/>
            <person name="Taki K."/>
            <person name="Tammoja K."/>
            <person name="Tan S.L."/>
            <person name="Tang S."/>
            <person name="Taylor M.S."/>
            <person name="Tegner J."/>
            <person name="Teichmann S.A."/>
            <person name="Ueda H.R."/>
            <person name="van Nimwegen E."/>
            <person name="Verardo R."/>
            <person name="Wei C.L."/>
            <person name="Yagi K."/>
            <person name="Yamanishi H."/>
            <person name="Zabarovsky E."/>
            <person name="Zhu S."/>
            <person name="Zimmer A."/>
            <person name="Hide W."/>
            <person name="Bult C."/>
            <person name="Grimmond S.M."/>
            <person name="Teasdale R.D."/>
            <person name="Liu E.T."/>
            <person name="Brusic V."/>
            <person name="Quackenbush J."/>
            <person name="Wahlestedt C."/>
            <person name="Mattick J.S."/>
            <person name="Hume D.A."/>
            <person name="Kai C."/>
            <person name="Sasaki D."/>
            <person name="Tomaru Y."/>
            <person name="Fukuda S."/>
            <person name="Kanamori-Katayama M."/>
            <person name="Suzuki M."/>
            <person name="Aoki J."/>
            <person name="Arakawa T."/>
            <person name="Iida J."/>
            <person name="Imamura K."/>
            <person name="Itoh M."/>
            <person name="Kato T."/>
            <person name="Kawaji H."/>
            <person name="Kawagashira N."/>
            <person name="Kawashima T."/>
            <person name="Kojima M."/>
            <person name="Kondo S."/>
            <person name="Konno H."/>
            <person name="Nakano K."/>
            <person name="Ninomiya N."/>
            <person name="Nishio T."/>
            <person name="Okada M."/>
            <person name="Plessy C."/>
            <person name="Shibata K."/>
            <person name="Shiraki T."/>
            <person name="Suzuki S."/>
            <person name="Tagami M."/>
            <person name="Waki K."/>
            <person name="Watahiki A."/>
            <person name="Okamura-Oho Y."/>
            <person name="Suzuki H."/>
            <person name="Kawai J."/>
            <person name="Hayashizaki Y."/>
        </authorList>
    </citation>
    <scope>NUCLEOTIDE SEQUENCE [LARGE SCALE MRNA]</scope>
    <source>
        <strain>C57BL/6J</strain>
        <strain>NOD</strain>
        <tissue>Spleen</tissue>
        <tissue>Thymus</tissue>
    </source>
</reference>
<reference key="2">
    <citation type="journal article" date="2004" name="Genome Res.">
        <title>The status, quality, and expansion of the NIH full-length cDNA project: the Mammalian Gene Collection (MGC).</title>
        <authorList>
            <consortium name="The MGC Project Team"/>
        </authorList>
    </citation>
    <scope>NUCLEOTIDE SEQUENCE [LARGE SCALE MRNA]</scope>
    <source>
        <tissue>Brain</tissue>
    </source>
</reference>
<protein>
    <recommendedName>
        <fullName>Solute carrier family 35 member G1</fullName>
    </recommendedName>
    <alternativeName>
        <fullName>Transmembrane protein 20</fullName>
    </alternativeName>
</protein>
<accession>Q8BY79</accession>
<accession>B2RPY9</accession>